<gene>
    <name evidence="1" type="primary">tal</name>
    <name type="ordered locus">Franean1_2074</name>
</gene>
<sequence length="369" mass="39652">MSKPLSDLSAAGVAVWLDDISRERIRTGNLAELARTRSVVGVTSNPTIFQKAIGGGETYNEQLRDLAVRGVDVGEAVRAITAADIRDACDILRPAYDASAGVDGRVSLEVDPRLAHETERTVAEARALWWSVDRPNLFIKIPATKSGLPAITATLAQGISVNVTLIFALDRYEAVMDAFMTGLEQALAAGRDISDVASVASFFVSRVDSEVDGRLAKIGTPKAEALRSKAAIANARLAYELYEKIFSTPRWERLAAAGAKPQRPLWASTSTKDPGLPDTLYVTELIAPGTVNTMPEATLEAFADHGVVPGDTITPNYEDARAVLAELTELGVDMADVVEVLEVEGVRKFEDSWNQLLDTIREQLGSAAS</sequence>
<feature type="chain" id="PRO_1000126264" description="Transaldolase">
    <location>
        <begin position="1"/>
        <end position="369"/>
    </location>
</feature>
<feature type="active site" description="Schiff-base intermediate with substrate" evidence="1">
    <location>
        <position position="140"/>
    </location>
</feature>
<keyword id="KW-0963">Cytoplasm</keyword>
<keyword id="KW-0570">Pentose shunt</keyword>
<keyword id="KW-0704">Schiff base</keyword>
<keyword id="KW-0808">Transferase</keyword>
<evidence type="ECO:0000255" key="1">
    <source>
        <dbReference type="HAMAP-Rule" id="MF_00493"/>
    </source>
</evidence>
<proteinExistence type="inferred from homology"/>
<protein>
    <recommendedName>
        <fullName evidence="1">Transaldolase</fullName>
        <ecNumber evidence="1">2.2.1.2</ecNumber>
    </recommendedName>
</protein>
<name>TAL_PARS2</name>
<accession>A8KYS5</accession>
<comment type="function">
    <text evidence="1">Transaldolase is important for the balance of metabolites in the pentose-phosphate pathway.</text>
</comment>
<comment type="catalytic activity">
    <reaction evidence="1">
        <text>D-sedoheptulose 7-phosphate + D-glyceraldehyde 3-phosphate = D-erythrose 4-phosphate + beta-D-fructose 6-phosphate</text>
        <dbReference type="Rhea" id="RHEA:17053"/>
        <dbReference type="ChEBI" id="CHEBI:16897"/>
        <dbReference type="ChEBI" id="CHEBI:57483"/>
        <dbReference type="ChEBI" id="CHEBI:57634"/>
        <dbReference type="ChEBI" id="CHEBI:59776"/>
        <dbReference type="EC" id="2.2.1.2"/>
    </reaction>
</comment>
<comment type="pathway">
    <text evidence="1">Carbohydrate degradation; pentose phosphate pathway; D-glyceraldehyde 3-phosphate and beta-D-fructose 6-phosphate from D-ribose 5-phosphate and D-xylulose 5-phosphate (non-oxidative stage): step 2/3.</text>
</comment>
<comment type="subcellular location">
    <subcellularLocation>
        <location evidence="1">Cytoplasm</location>
    </subcellularLocation>
</comment>
<comment type="similarity">
    <text evidence="1">Belongs to the transaldolase family. Type 2 subfamily.</text>
</comment>
<dbReference type="EC" id="2.2.1.2" evidence="1"/>
<dbReference type="EMBL" id="CP000820">
    <property type="protein sequence ID" value="ABW11511.1"/>
    <property type="molecule type" value="Genomic_DNA"/>
</dbReference>
<dbReference type="RefSeq" id="WP_020459677.1">
    <property type="nucleotide sequence ID" value="NC_009921.1"/>
</dbReference>
<dbReference type="SMR" id="A8KYS5"/>
<dbReference type="STRING" id="298653.Franean1_2074"/>
<dbReference type="KEGG" id="fre:Franean1_2074"/>
<dbReference type="eggNOG" id="COG0176">
    <property type="taxonomic scope" value="Bacteria"/>
</dbReference>
<dbReference type="HOGENOM" id="CLU_050771_1_0_11"/>
<dbReference type="UniPathway" id="UPA00115">
    <property type="reaction ID" value="UER00414"/>
</dbReference>
<dbReference type="GO" id="GO:0005737">
    <property type="term" value="C:cytoplasm"/>
    <property type="evidence" value="ECO:0007669"/>
    <property type="project" value="UniProtKB-SubCell"/>
</dbReference>
<dbReference type="GO" id="GO:0004801">
    <property type="term" value="F:transaldolase activity"/>
    <property type="evidence" value="ECO:0007669"/>
    <property type="project" value="UniProtKB-UniRule"/>
</dbReference>
<dbReference type="GO" id="GO:0005975">
    <property type="term" value="P:carbohydrate metabolic process"/>
    <property type="evidence" value="ECO:0007669"/>
    <property type="project" value="InterPro"/>
</dbReference>
<dbReference type="GO" id="GO:0006098">
    <property type="term" value="P:pentose-phosphate shunt"/>
    <property type="evidence" value="ECO:0007669"/>
    <property type="project" value="UniProtKB-UniRule"/>
</dbReference>
<dbReference type="CDD" id="cd00955">
    <property type="entry name" value="Transaldolase_like"/>
    <property type="match status" value="1"/>
</dbReference>
<dbReference type="Gene3D" id="3.20.20.70">
    <property type="entry name" value="Aldolase class I"/>
    <property type="match status" value="1"/>
</dbReference>
<dbReference type="HAMAP" id="MF_00493">
    <property type="entry name" value="Transaldolase_2"/>
    <property type="match status" value="1"/>
</dbReference>
<dbReference type="InterPro" id="IPR013785">
    <property type="entry name" value="Aldolase_TIM"/>
</dbReference>
<dbReference type="InterPro" id="IPR001585">
    <property type="entry name" value="TAL/FSA"/>
</dbReference>
<dbReference type="InterPro" id="IPR004732">
    <property type="entry name" value="Transaldolase_2"/>
</dbReference>
<dbReference type="InterPro" id="IPR018225">
    <property type="entry name" value="Transaldolase_AS"/>
</dbReference>
<dbReference type="NCBIfam" id="NF002881">
    <property type="entry name" value="PRK03343.1"/>
    <property type="match status" value="1"/>
</dbReference>
<dbReference type="NCBIfam" id="TIGR00876">
    <property type="entry name" value="tal_mycobact"/>
    <property type="match status" value="1"/>
</dbReference>
<dbReference type="PANTHER" id="PTHR10683">
    <property type="entry name" value="TRANSALDOLASE"/>
    <property type="match status" value="1"/>
</dbReference>
<dbReference type="PANTHER" id="PTHR10683:SF31">
    <property type="entry name" value="TRANSALDOLASE"/>
    <property type="match status" value="1"/>
</dbReference>
<dbReference type="Pfam" id="PF00923">
    <property type="entry name" value="TAL_FSA"/>
    <property type="match status" value="1"/>
</dbReference>
<dbReference type="PIRSF" id="PIRSF036915">
    <property type="entry name" value="Trnald_Bac_Plnt"/>
    <property type="match status" value="1"/>
</dbReference>
<dbReference type="SUPFAM" id="SSF51569">
    <property type="entry name" value="Aldolase"/>
    <property type="match status" value="1"/>
</dbReference>
<dbReference type="PROSITE" id="PS01054">
    <property type="entry name" value="TRANSALDOLASE_1"/>
    <property type="match status" value="1"/>
</dbReference>
<organism>
    <name type="scientific">Parafrankia sp. (strain EAN1pec)</name>
    <dbReference type="NCBI Taxonomy" id="298653"/>
    <lineage>
        <taxon>Bacteria</taxon>
        <taxon>Bacillati</taxon>
        <taxon>Actinomycetota</taxon>
        <taxon>Actinomycetes</taxon>
        <taxon>Frankiales</taxon>
        <taxon>Frankiaceae</taxon>
        <taxon>Parafrankia</taxon>
    </lineage>
</organism>
<reference key="1">
    <citation type="journal article" date="2007" name="Genome Res.">
        <title>Genome characteristics of facultatively symbiotic Frankia sp. strains reflect host range and host plant biogeography.</title>
        <authorList>
            <person name="Normand P."/>
            <person name="Lapierre P."/>
            <person name="Tisa L.S."/>
            <person name="Gogarten J.P."/>
            <person name="Alloisio N."/>
            <person name="Bagnarol E."/>
            <person name="Bassi C.A."/>
            <person name="Berry A.M."/>
            <person name="Bickhart D.M."/>
            <person name="Choisne N."/>
            <person name="Couloux A."/>
            <person name="Cournoyer B."/>
            <person name="Cruveiller S."/>
            <person name="Daubin V."/>
            <person name="Demange N."/>
            <person name="Francino M.P."/>
            <person name="Goltsman E."/>
            <person name="Huang Y."/>
            <person name="Kopp O.R."/>
            <person name="Labarre L."/>
            <person name="Lapidus A."/>
            <person name="Lavire C."/>
            <person name="Marechal J."/>
            <person name="Martinez M."/>
            <person name="Mastronunzio J.E."/>
            <person name="Mullin B.C."/>
            <person name="Niemann J."/>
            <person name="Pujic P."/>
            <person name="Rawnsley T."/>
            <person name="Rouy Z."/>
            <person name="Schenowitz C."/>
            <person name="Sellstedt A."/>
            <person name="Tavares F."/>
            <person name="Tomkins J.P."/>
            <person name="Vallenet D."/>
            <person name="Valverde C."/>
            <person name="Wall L.G."/>
            <person name="Wang Y."/>
            <person name="Medigue C."/>
            <person name="Benson D.R."/>
        </authorList>
    </citation>
    <scope>NUCLEOTIDE SEQUENCE [LARGE SCALE GENOMIC DNA]</scope>
    <source>
        <strain>EAN1pec</strain>
    </source>
</reference>